<reference key="1">
    <citation type="journal article" date="2002" name="J. Bacteriol.">
        <title>Genome sequence and analysis of the oral bacterium Fusobacterium nucleatum strain ATCC 25586.</title>
        <authorList>
            <person name="Kapatral V."/>
            <person name="Anderson I."/>
            <person name="Ivanova N."/>
            <person name="Reznik G."/>
            <person name="Los T."/>
            <person name="Lykidis A."/>
            <person name="Bhattacharyya A."/>
            <person name="Bartman A."/>
            <person name="Gardner W."/>
            <person name="Grechkin G."/>
            <person name="Zhu L."/>
            <person name="Vasieva O."/>
            <person name="Chu L."/>
            <person name="Kogan Y."/>
            <person name="Chaga O."/>
            <person name="Goltsman E."/>
            <person name="Bernal A."/>
            <person name="Larsen N."/>
            <person name="D'Souza M."/>
            <person name="Walunas T."/>
            <person name="Pusch G."/>
            <person name="Haselkorn R."/>
            <person name="Fonstein M."/>
            <person name="Kyrpides N.C."/>
            <person name="Overbeek R."/>
        </authorList>
    </citation>
    <scope>NUCLEOTIDE SEQUENCE [LARGE SCALE GENOMIC DNA]</scope>
    <source>
        <strain>ATCC 25586 / DSM 15643 / BCRC 10681 / CIP 101130 / JCM 8532 / KCTC 2640 / LMG 13131 / VPI 4355</strain>
    </source>
</reference>
<keyword id="KW-0312">Gluconeogenesis</keyword>
<keyword id="KW-0324">Glycolysis</keyword>
<keyword id="KW-0413">Isomerase</keyword>
<keyword id="KW-1185">Reference proteome</keyword>
<organism>
    <name type="scientific">Fusobacterium nucleatum subsp. nucleatum (strain ATCC 25586 / DSM 15643 / BCRC 10681 / CIP 101130 / JCM 8532 / KCTC 2640 / LMG 13131 / VPI 4355)</name>
    <dbReference type="NCBI Taxonomy" id="190304"/>
    <lineage>
        <taxon>Bacteria</taxon>
        <taxon>Fusobacteriati</taxon>
        <taxon>Fusobacteriota</taxon>
        <taxon>Fusobacteriia</taxon>
        <taxon>Fusobacteriales</taxon>
        <taxon>Fusobacteriaceae</taxon>
        <taxon>Fusobacterium</taxon>
    </lineage>
</organism>
<gene>
    <name evidence="1" type="primary">gpmA</name>
    <name type="ordered locus">FN0729</name>
</gene>
<comment type="function">
    <text evidence="1">Catalyzes the interconversion of 2-phosphoglycerate and 3-phosphoglycerate.</text>
</comment>
<comment type="catalytic activity">
    <reaction evidence="1">
        <text>(2R)-2-phosphoglycerate = (2R)-3-phosphoglycerate</text>
        <dbReference type="Rhea" id="RHEA:15901"/>
        <dbReference type="ChEBI" id="CHEBI:58272"/>
        <dbReference type="ChEBI" id="CHEBI:58289"/>
        <dbReference type="EC" id="5.4.2.11"/>
    </reaction>
</comment>
<comment type="pathway">
    <text evidence="1">Carbohydrate degradation; glycolysis; pyruvate from D-glyceraldehyde 3-phosphate: step 3/5.</text>
</comment>
<comment type="similarity">
    <text evidence="1">Belongs to the phosphoglycerate mutase family. BPG-dependent PGAM subfamily.</text>
</comment>
<evidence type="ECO:0000255" key="1">
    <source>
        <dbReference type="HAMAP-Rule" id="MF_01039"/>
    </source>
</evidence>
<protein>
    <recommendedName>
        <fullName evidence="1">2,3-bisphosphoglycerate-dependent phosphoglycerate mutase</fullName>
        <shortName evidence="1">BPG-dependent PGAM</shortName>
        <shortName evidence="1">PGAM</shortName>
        <shortName evidence="1">Phosphoglyceromutase</shortName>
        <shortName evidence="1">dPGM</shortName>
        <ecNumber evidence="1">5.4.2.11</ecNumber>
    </recommendedName>
</protein>
<dbReference type="EC" id="5.4.2.11" evidence="1"/>
<dbReference type="EMBL" id="AE009951">
    <property type="protein sequence ID" value="AAL94925.1"/>
    <property type="molecule type" value="Genomic_DNA"/>
</dbReference>
<dbReference type="RefSeq" id="NP_603626.1">
    <property type="nucleotide sequence ID" value="NC_003454.1"/>
</dbReference>
<dbReference type="RefSeq" id="WP_005902448.1">
    <property type="nucleotide sequence ID" value="NZ_OZ209243.1"/>
</dbReference>
<dbReference type="SMR" id="Q8RFG9"/>
<dbReference type="STRING" id="190304.FN0729"/>
<dbReference type="PaxDb" id="190304-FN0729"/>
<dbReference type="EnsemblBacteria" id="AAL94925">
    <property type="protein sequence ID" value="AAL94925"/>
    <property type="gene ID" value="FN0729"/>
</dbReference>
<dbReference type="GeneID" id="79783722"/>
<dbReference type="KEGG" id="fnu:FN0729"/>
<dbReference type="PATRIC" id="fig|190304.8.peg.1292"/>
<dbReference type="eggNOG" id="COG0588">
    <property type="taxonomic scope" value="Bacteria"/>
</dbReference>
<dbReference type="HOGENOM" id="CLU_033323_1_1_0"/>
<dbReference type="InParanoid" id="Q8RFG9"/>
<dbReference type="BioCyc" id="FNUC190304:G1FZS-1315-MONOMER"/>
<dbReference type="UniPathway" id="UPA00109">
    <property type="reaction ID" value="UER00186"/>
</dbReference>
<dbReference type="Proteomes" id="UP000002521">
    <property type="component" value="Chromosome"/>
</dbReference>
<dbReference type="GO" id="GO:0004619">
    <property type="term" value="F:phosphoglycerate mutase activity"/>
    <property type="evidence" value="ECO:0007669"/>
    <property type="project" value="UniProtKB-EC"/>
</dbReference>
<dbReference type="GO" id="GO:0006094">
    <property type="term" value="P:gluconeogenesis"/>
    <property type="evidence" value="ECO:0007669"/>
    <property type="project" value="UniProtKB-UniRule"/>
</dbReference>
<dbReference type="GO" id="GO:0006096">
    <property type="term" value="P:glycolytic process"/>
    <property type="evidence" value="ECO:0007669"/>
    <property type="project" value="UniProtKB-UniRule"/>
</dbReference>
<dbReference type="CDD" id="cd07067">
    <property type="entry name" value="HP_PGM_like"/>
    <property type="match status" value="1"/>
</dbReference>
<dbReference type="FunFam" id="3.40.50.1240:FF:000003">
    <property type="entry name" value="2,3-bisphosphoglycerate-dependent phosphoglycerate mutase"/>
    <property type="match status" value="1"/>
</dbReference>
<dbReference type="Gene3D" id="3.40.50.1240">
    <property type="entry name" value="Phosphoglycerate mutase-like"/>
    <property type="match status" value="1"/>
</dbReference>
<dbReference type="HAMAP" id="MF_01039">
    <property type="entry name" value="PGAM_GpmA"/>
    <property type="match status" value="1"/>
</dbReference>
<dbReference type="InterPro" id="IPR013078">
    <property type="entry name" value="His_Pase_superF_clade-1"/>
</dbReference>
<dbReference type="InterPro" id="IPR029033">
    <property type="entry name" value="His_PPase_superfam"/>
</dbReference>
<dbReference type="InterPro" id="IPR001345">
    <property type="entry name" value="PG/BPGM_mutase_AS"/>
</dbReference>
<dbReference type="InterPro" id="IPR005952">
    <property type="entry name" value="Phosphogly_mut1"/>
</dbReference>
<dbReference type="NCBIfam" id="TIGR01258">
    <property type="entry name" value="pgm_1"/>
    <property type="match status" value="1"/>
</dbReference>
<dbReference type="NCBIfam" id="NF010713">
    <property type="entry name" value="PRK14115.1"/>
    <property type="match status" value="1"/>
</dbReference>
<dbReference type="PANTHER" id="PTHR11931">
    <property type="entry name" value="PHOSPHOGLYCERATE MUTASE"/>
    <property type="match status" value="1"/>
</dbReference>
<dbReference type="Pfam" id="PF00300">
    <property type="entry name" value="His_Phos_1"/>
    <property type="match status" value="2"/>
</dbReference>
<dbReference type="PIRSF" id="PIRSF000709">
    <property type="entry name" value="6PFK_2-Ptase"/>
    <property type="match status" value="1"/>
</dbReference>
<dbReference type="SMART" id="SM00855">
    <property type="entry name" value="PGAM"/>
    <property type="match status" value="1"/>
</dbReference>
<dbReference type="SUPFAM" id="SSF53254">
    <property type="entry name" value="Phosphoglycerate mutase-like"/>
    <property type="match status" value="1"/>
</dbReference>
<dbReference type="PROSITE" id="PS00175">
    <property type="entry name" value="PG_MUTASE"/>
    <property type="match status" value="1"/>
</dbReference>
<proteinExistence type="inferred from homology"/>
<feature type="chain" id="PRO_0000179877" description="2,3-bisphosphoglycerate-dependent phosphoglycerate mutase">
    <location>
        <begin position="1"/>
        <end position="228"/>
    </location>
</feature>
<feature type="active site" description="Tele-phosphohistidine intermediate" evidence="1">
    <location>
        <position position="8"/>
    </location>
</feature>
<feature type="active site" description="Proton donor/acceptor" evidence="1">
    <location>
        <position position="86"/>
    </location>
</feature>
<feature type="binding site" evidence="1">
    <location>
        <begin position="7"/>
        <end position="14"/>
    </location>
    <ligand>
        <name>substrate</name>
    </ligand>
</feature>
<feature type="binding site" evidence="1">
    <location>
        <begin position="20"/>
        <end position="21"/>
    </location>
    <ligand>
        <name>substrate</name>
    </ligand>
</feature>
<feature type="binding site" evidence="1">
    <location>
        <position position="59"/>
    </location>
    <ligand>
        <name>substrate</name>
    </ligand>
</feature>
<feature type="binding site" evidence="1">
    <location>
        <begin position="86"/>
        <end position="89"/>
    </location>
    <ligand>
        <name>substrate</name>
    </ligand>
</feature>
<feature type="binding site" evidence="1">
    <location>
        <position position="97"/>
    </location>
    <ligand>
        <name>substrate</name>
    </ligand>
</feature>
<feature type="binding site" evidence="1">
    <location>
        <begin position="113"/>
        <end position="114"/>
    </location>
    <ligand>
        <name>substrate</name>
    </ligand>
</feature>
<feature type="binding site" evidence="1">
    <location>
        <begin position="182"/>
        <end position="183"/>
    </location>
    <ligand>
        <name>substrate</name>
    </ligand>
</feature>
<feature type="site" description="Transition state stabilizer" evidence="1">
    <location>
        <position position="181"/>
    </location>
</feature>
<name>GPMA_FUSNN</name>
<sequence>MKLVLIRHGESAWNLENRFTGWKDVDLSPKGMEEAKSAGKILKEMNLVFDVAYTSYLKRAIKTLNIVLEEMDELYIPVYKSWRLNERHYGALQGLNKAETAKKYGDEQVHIWRRSFDVAPPSIDKNSEYYPKSDRRYADLADSDIPLGESLKDTIARVLPYWHSDISKSLQEEKNVIVAAHGNSLRALIKYLLNISNEDILNLNLVTGKPMVFEIDKDLKVLSSPELF</sequence>
<accession>Q8RFG9</accession>